<proteinExistence type="inferred from homology"/>
<organism>
    <name type="scientific">Buchnera aphidicola subsp. Schizaphis graminum (strain Sg)</name>
    <dbReference type="NCBI Taxonomy" id="198804"/>
    <lineage>
        <taxon>Bacteria</taxon>
        <taxon>Pseudomonadati</taxon>
        <taxon>Pseudomonadota</taxon>
        <taxon>Gammaproteobacteria</taxon>
        <taxon>Enterobacterales</taxon>
        <taxon>Erwiniaceae</taxon>
        <taxon>Buchnera</taxon>
    </lineage>
</organism>
<protein>
    <recommendedName>
        <fullName>Imidazole glycerol phosphate synthase subunit HisF</fullName>
        <ecNumber>4.3.2.10</ecNumber>
    </recommendedName>
    <alternativeName>
        <fullName>IGP synthase cyclase subunit</fullName>
    </alternativeName>
    <alternativeName>
        <fullName>IGP synthase subunit HisF</fullName>
    </alternativeName>
    <alternativeName>
        <fullName>ImGP synthase subunit HisF</fullName>
        <shortName>IGPS subunit HisF</shortName>
    </alternativeName>
</protein>
<dbReference type="EC" id="4.3.2.10"/>
<dbReference type="EMBL" id="AF067228">
    <property type="protein sequence ID" value="AAC97360.1"/>
    <property type="molecule type" value="Genomic_DNA"/>
</dbReference>
<dbReference type="EMBL" id="AE013218">
    <property type="protein sequence ID" value="AAM67668.1"/>
    <property type="molecule type" value="Genomic_DNA"/>
</dbReference>
<dbReference type="RefSeq" id="WP_011053634.1">
    <property type="nucleotide sequence ID" value="NC_004061.1"/>
</dbReference>
<dbReference type="SMR" id="Q9ZHE1"/>
<dbReference type="STRING" id="198804.BUsg_098"/>
<dbReference type="GeneID" id="93003567"/>
<dbReference type="KEGG" id="bas:BUsg_098"/>
<dbReference type="eggNOG" id="COG0107">
    <property type="taxonomic scope" value="Bacteria"/>
</dbReference>
<dbReference type="HOGENOM" id="CLU_048577_4_0_6"/>
<dbReference type="UniPathway" id="UPA00031">
    <property type="reaction ID" value="UER00010"/>
</dbReference>
<dbReference type="Proteomes" id="UP000000416">
    <property type="component" value="Chromosome"/>
</dbReference>
<dbReference type="GO" id="GO:0005737">
    <property type="term" value="C:cytoplasm"/>
    <property type="evidence" value="ECO:0007669"/>
    <property type="project" value="UniProtKB-SubCell"/>
</dbReference>
<dbReference type="GO" id="GO:0000107">
    <property type="term" value="F:imidazoleglycerol-phosphate synthase activity"/>
    <property type="evidence" value="ECO:0007669"/>
    <property type="project" value="UniProtKB-UniRule"/>
</dbReference>
<dbReference type="GO" id="GO:0016829">
    <property type="term" value="F:lyase activity"/>
    <property type="evidence" value="ECO:0007669"/>
    <property type="project" value="UniProtKB-KW"/>
</dbReference>
<dbReference type="GO" id="GO:0000105">
    <property type="term" value="P:L-histidine biosynthetic process"/>
    <property type="evidence" value="ECO:0007669"/>
    <property type="project" value="UniProtKB-UniRule"/>
</dbReference>
<dbReference type="CDD" id="cd04731">
    <property type="entry name" value="HisF"/>
    <property type="match status" value="1"/>
</dbReference>
<dbReference type="FunFam" id="3.20.20.70:FF:000006">
    <property type="entry name" value="Imidazole glycerol phosphate synthase subunit HisF"/>
    <property type="match status" value="1"/>
</dbReference>
<dbReference type="Gene3D" id="3.20.20.70">
    <property type="entry name" value="Aldolase class I"/>
    <property type="match status" value="1"/>
</dbReference>
<dbReference type="HAMAP" id="MF_01013">
    <property type="entry name" value="HisF"/>
    <property type="match status" value="1"/>
</dbReference>
<dbReference type="InterPro" id="IPR013785">
    <property type="entry name" value="Aldolase_TIM"/>
</dbReference>
<dbReference type="InterPro" id="IPR006062">
    <property type="entry name" value="His_biosynth"/>
</dbReference>
<dbReference type="InterPro" id="IPR004651">
    <property type="entry name" value="HisF"/>
</dbReference>
<dbReference type="InterPro" id="IPR050064">
    <property type="entry name" value="IGPS_HisA/HisF"/>
</dbReference>
<dbReference type="InterPro" id="IPR011060">
    <property type="entry name" value="RibuloseP-bd_barrel"/>
</dbReference>
<dbReference type="NCBIfam" id="TIGR00735">
    <property type="entry name" value="hisF"/>
    <property type="match status" value="1"/>
</dbReference>
<dbReference type="PANTHER" id="PTHR21235:SF2">
    <property type="entry name" value="IMIDAZOLE GLYCEROL PHOSPHATE SYNTHASE HISHF"/>
    <property type="match status" value="1"/>
</dbReference>
<dbReference type="PANTHER" id="PTHR21235">
    <property type="entry name" value="IMIDAZOLE GLYCEROL PHOSPHATE SYNTHASE SUBUNIT HISF/H IGP SYNTHASE SUBUNIT HISF/H"/>
    <property type="match status" value="1"/>
</dbReference>
<dbReference type="Pfam" id="PF00977">
    <property type="entry name" value="His_biosynth"/>
    <property type="match status" value="1"/>
</dbReference>
<dbReference type="SUPFAM" id="SSF51366">
    <property type="entry name" value="Ribulose-phoshate binding barrel"/>
    <property type="match status" value="1"/>
</dbReference>
<feature type="chain" id="PRO_0000142134" description="Imidazole glycerol phosphate synthase subunit HisF">
    <location>
        <begin position="1"/>
        <end position="258"/>
    </location>
</feature>
<feature type="active site" evidence="2">
    <location>
        <position position="11"/>
    </location>
</feature>
<feature type="active site" evidence="2">
    <location>
        <position position="130"/>
    </location>
</feature>
<feature type="sequence conflict" description="In Ref. 1; AAC97360." evidence="3" ref="1">
    <original>S</original>
    <variation>C</variation>
    <location>
        <position position="55"/>
    </location>
</feature>
<name>HIS6_BUCAP</name>
<sequence length="258" mass="28771">MLAKRIIACLDVNNGVVVKGIQFKNHEIVGDIISLSKRYTKEGIDELVFYDITASTNNKLVDRSWIKKVAEIINIPFCVAGGIKSVEDAQNILSFGADKISINSSALIDPDLITKIANRFGVQCTVVGIDSWFDSDKKKYMVQQYTGDANRTYQTDWETIDWVEKVQKKGAGEIVLNMMNQDGLQNGYDLSQLNEIRKKCKVPLIASGGAGCADHFYQAFDHANVDGVLAASVFHKKIVNIKDLKYFLIQKGLEIRIC</sequence>
<reference key="1">
    <citation type="journal article" date="1998" name="Curr. Microbiol.">
        <title>Buchnera aphidicola (Aphid endosymbiont) contains genes encoding enzymes of histidine biosynthesis.</title>
        <authorList>
            <person name="Clark M.A."/>
            <person name="Baumann L."/>
            <person name="Baumann P."/>
        </authorList>
    </citation>
    <scope>NUCLEOTIDE SEQUENCE [GENOMIC DNA]</scope>
</reference>
<reference key="2">
    <citation type="journal article" date="2002" name="Science">
        <title>50 million years of genomic stasis in endosymbiotic bacteria.</title>
        <authorList>
            <person name="Tamas I."/>
            <person name="Klasson L."/>
            <person name="Canbaeck B."/>
            <person name="Naeslund A.K."/>
            <person name="Eriksson A.-S."/>
            <person name="Wernegreen J.J."/>
            <person name="Sandstroem J.P."/>
            <person name="Moran N.A."/>
            <person name="Andersson S.G.E."/>
        </authorList>
    </citation>
    <scope>NUCLEOTIDE SEQUENCE [LARGE SCALE GENOMIC DNA]</scope>
    <source>
        <strain>Sg</strain>
    </source>
</reference>
<gene>
    <name type="primary">hisF</name>
    <name type="ordered locus">BUsg_098</name>
</gene>
<accession>Q9ZHE1</accession>
<comment type="function">
    <text evidence="1">IGPS catalyzes the conversion of PRFAR and glutamine to IGP, AICAR and glutamate. The HisF subunit catalyzes the cyclization activity that produces IGP and AICAR from PRFAR using the ammonia provided by the HisH subunit (By similarity).</text>
</comment>
<comment type="catalytic activity">
    <reaction>
        <text>5-[(5-phospho-1-deoxy-D-ribulos-1-ylimino)methylamino]-1-(5-phospho-beta-D-ribosyl)imidazole-4-carboxamide + L-glutamine = D-erythro-1-(imidazol-4-yl)glycerol 3-phosphate + 5-amino-1-(5-phospho-beta-D-ribosyl)imidazole-4-carboxamide + L-glutamate + H(+)</text>
        <dbReference type="Rhea" id="RHEA:24793"/>
        <dbReference type="ChEBI" id="CHEBI:15378"/>
        <dbReference type="ChEBI" id="CHEBI:29985"/>
        <dbReference type="ChEBI" id="CHEBI:58278"/>
        <dbReference type="ChEBI" id="CHEBI:58359"/>
        <dbReference type="ChEBI" id="CHEBI:58475"/>
        <dbReference type="ChEBI" id="CHEBI:58525"/>
        <dbReference type="EC" id="4.3.2.10"/>
    </reaction>
</comment>
<comment type="pathway">
    <text>Amino-acid biosynthesis; L-histidine biosynthesis; L-histidine from 5-phospho-alpha-D-ribose 1-diphosphate: step 5/9.</text>
</comment>
<comment type="subunit">
    <text evidence="1">Heterodimer of HisH and HisF.</text>
</comment>
<comment type="subcellular location">
    <subcellularLocation>
        <location evidence="1">Cytoplasm</location>
    </subcellularLocation>
</comment>
<comment type="similarity">
    <text evidence="3">Belongs to the HisA/HisF family.</text>
</comment>
<evidence type="ECO:0000250" key="1"/>
<evidence type="ECO:0000255" key="2"/>
<evidence type="ECO:0000305" key="3"/>
<keyword id="KW-0028">Amino-acid biosynthesis</keyword>
<keyword id="KW-0963">Cytoplasm</keyword>
<keyword id="KW-0368">Histidine biosynthesis</keyword>
<keyword id="KW-0456">Lyase</keyword>